<accession>P28486</accession>
<sequence length="272" mass="30302">MFDLTGKHVCYVADCGGIALETSKVLMTKNIAKLAILQSTENPQAIAQLQSIKPSTQIFFWTYDVTMAREEMKKYFDEVMVQMDYIDVLINGATLCDENNIDATINTNLTGMMNTVATVLPYMDRQMGGSGGLIVNVTSVIGLDPSPVFCAYSASKFGVIGFTRSLADPLYYSQNGVAVMAVCCGPTRVFVDRELKAFLEYGQSFADRLRRAPCQSTSVCGQNIVNAIERSENGQIWIADKGGLELVKLHWYWHMADQFLHYMQSNDEEDQE</sequence>
<evidence type="ECO:0000250" key="1"/>
<evidence type="ECO:0000255" key="2">
    <source>
        <dbReference type="PROSITE-ProRule" id="PRU10001"/>
    </source>
</evidence>
<evidence type="ECO:0000305" key="3"/>
<comment type="similarity">
    <text evidence="3">Belongs to the short-chain dehydrogenases/reductases (SDR) family.</text>
</comment>
<gene>
    <name type="primary">Adhr</name>
    <name type="synonym">Adh-dup</name>
</gene>
<dbReference type="EMBL" id="X54118">
    <property type="protein sequence ID" value="CAA38061.1"/>
    <property type="molecule type" value="Genomic_DNA"/>
</dbReference>
<dbReference type="PIR" id="S20716">
    <property type="entry name" value="S20716"/>
</dbReference>
<dbReference type="SMR" id="P28486"/>
<dbReference type="GO" id="GO:0005737">
    <property type="term" value="C:cytoplasm"/>
    <property type="evidence" value="ECO:0007669"/>
    <property type="project" value="TreeGrafter"/>
</dbReference>
<dbReference type="GO" id="GO:0016491">
    <property type="term" value="F:oxidoreductase activity"/>
    <property type="evidence" value="ECO:0007669"/>
    <property type="project" value="UniProtKB-KW"/>
</dbReference>
<dbReference type="CDD" id="cd05323">
    <property type="entry name" value="ADH_SDR_c_like"/>
    <property type="match status" value="1"/>
</dbReference>
<dbReference type="Gene3D" id="3.40.50.720">
    <property type="entry name" value="NAD(P)-binding Rossmann-like Domain"/>
    <property type="match status" value="1"/>
</dbReference>
<dbReference type="InterPro" id="IPR002427">
    <property type="entry name" value="ADH-rel"/>
</dbReference>
<dbReference type="InterPro" id="IPR036291">
    <property type="entry name" value="NAD(P)-bd_dom_sf"/>
</dbReference>
<dbReference type="InterPro" id="IPR020904">
    <property type="entry name" value="Sc_DH/Rdtase_CS"/>
</dbReference>
<dbReference type="InterPro" id="IPR002347">
    <property type="entry name" value="SDR_fam"/>
</dbReference>
<dbReference type="PANTHER" id="PTHR44229">
    <property type="entry name" value="15-HYDROXYPROSTAGLANDIN DEHYDROGENASE [NAD(+)]"/>
    <property type="match status" value="1"/>
</dbReference>
<dbReference type="PANTHER" id="PTHR44229:SF8">
    <property type="entry name" value="ALCOHOL DEHYDROGENASE-RELATED"/>
    <property type="match status" value="1"/>
</dbReference>
<dbReference type="Pfam" id="PF00106">
    <property type="entry name" value="adh_short"/>
    <property type="match status" value="1"/>
</dbReference>
<dbReference type="PRINTS" id="PR01170">
    <property type="entry name" value="ADHRELATED"/>
</dbReference>
<dbReference type="PRINTS" id="PR01167">
    <property type="entry name" value="INSADHFAMILY"/>
</dbReference>
<dbReference type="PRINTS" id="PR00080">
    <property type="entry name" value="SDRFAMILY"/>
</dbReference>
<dbReference type="SUPFAM" id="SSF51735">
    <property type="entry name" value="NAD(P)-binding Rossmann-fold domains"/>
    <property type="match status" value="1"/>
</dbReference>
<dbReference type="PROSITE" id="PS00061">
    <property type="entry name" value="ADH_SHORT"/>
    <property type="match status" value="1"/>
</dbReference>
<reference key="1">
    <citation type="submission" date="1990-07" db="EMBL/GenBank/DDBJ databases">
        <authorList>
            <person name="Ashburner M."/>
        </authorList>
    </citation>
    <scope>NUCLEOTIDE SEQUENCE [GENOMIC DNA]</scope>
</reference>
<name>ADHR_DROTE</name>
<protein>
    <recommendedName>
        <fullName>Alcohol dehydrogenase-related 31 kDa protein</fullName>
    </recommendedName>
</protein>
<keyword id="KW-0560">Oxidoreductase</keyword>
<feature type="chain" id="PRO_0000054513" description="Alcohol dehydrogenase-related 31 kDa protein">
    <location>
        <begin position="1"/>
        <end position="272" status="greater than"/>
    </location>
</feature>
<feature type="active site" description="Proton acceptor" evidence="2">
    <location>
        <position position="152"/>
    </location>
</feature>
<feature type="binding site" evidence="1">
    <location>
        <begin position="11"/>
        <end position="34"/>
    </location>
    <ligand>
        <name>NAD(+)</name>
        <dbReference type="ChEBI" id="CHEBI:57540"/>
    </ligand>
</feature>
<feature type="binding site" evidence="1">
    <location>
        <position position="139"/>
    </location>
    <ligand>
        <name>substrate</name>
    </ligand>
</feature>
<feature type="non-terminal residue">
    <location>
        <position position="272"/>
    </location>
</feature>
<proteinExistence type="inferred from homology"/>
<organism>
    <name type="scientific">Drosophila teissieri</name>
    <name type="common">Fruit fly</name>
    <dbReference type="NCBI Taxonomy" id="7243"/>
    <lineage>
        <taxon>Eukaryota</taxon>
        <taxon>Metazoa</taxon>
        <taxon>Ecdysozoa</taxon>
        <taxon>Arthropoda</taxon>
        <taxon>Hexapoda</taxon>
        <taxon>Insecta</taxon>
        <taxon>Pterygota</taxon>
        <taxon>Neoptera</taxon>
        <taxon>Endopterygota</taxon>
        <taxon>Diptera</taxon>
        <taxon>Brachycera</taxon>
        <taxon>Muscomorpha</taxon>
        <taxon>Ephydroidea</taxon>
        <taxon>Drosophilidae</taxon>
        <taxon>Drosophila</taxon>
        <taxon>Sophophora</taxon>
    </lineage>
</organism>